<reference key="1">
    <citation type="journal article" date="2011" name="Stand. Genomic Sci.">
        <title>Complete genome sequence of 'Thioalkalivibrio sulfidophilus' HL-EbGr7.</title>
        <authorList>
            <person name="Muyzer G."/>
            <person name="Sorokin D.Y."/>
            <person name="Mavromatis K."/>
            <person name="Lapidus A."/>
            <person name="Clum A."/>
            <person name="Ivanova N."/>
            <person name="Pati A."/>
            <person name="d'Haeseleer P."/>
            <person name="Woyke T."/>
            <person name="Kyrpides N.C."/>
        </authorList>
    </citation>
    <scope>NUCLEOTIDE SEQUENCE [LARGE SCALE GENOMIC DNA]</scope>
    <source>
        <strain>HL-EbGR7</strain>
    </source>
</reference>
<feature type="chain" id="PRO_1000124446" description="Polyamine aminopropyltransferase">
    <location>
        <begin position="1"/>
        <end position="283"/>
    </location>
</feature>
<feature type="domain" description="PABS" evidence="1">
    <location>
        <begin position="5"/>
        <end position="240"/>
    </location>
</feature>
<feature type="active site" description="Proton acceptor" evidence="1">
    <location>
        <position position="158"/>
    </location>
</feature>
<feature type="binding site" evidence="1">
    <location>
        <position position="33"/>
    </location>
    <ligand>
        <name>S-methyl-5'-thioadenosine</name>
        <dbReference type="ChEBI" id="CHEBI:17509"/>
    </ligand>
</feature>
<feature type="binding site" evidence="1">
    <location>
        <position position="64"/>
    </location>
    <ligand>
        <name>spermidine</name>
        <dbReference type="ChEBI" id="CHEBI:57834"/>
    </ligand>
</feature>
<feature type="binding site" evidence="1">
    <location>
        <position position="88"/>
    </location>
    <ligand>
        <name>spermidine</name>
        <dbReference type="ChEBI" id="CHEBI:57834"/>
    </ligand>
</feature>
<feature type="binding site" evidence="1">
    <location>
        <position position="108"/>
    </location>
    <ligand>
        <name>S-methyl-5'-thioadenosine</name>
        <dbReference type="ChEBI" id="CHEBI:17509"/>
    </ligand>
</feature>
<feature type="binding site" evidence="1">
    <location>
        <begin position="139"/>
        <end position="140"/>
    </location>
    <ligand>
        <name>S-methyl-5'-thioadenosine</name>
        <dbReference type="ChEBI" id="CHEBI:17509"/>
    </ligand>
</feature>
<feature type="binding site" evidence="1">
    <location>
        <begin position="158"/>
        <end position="161"/>
    </location>
    <ligand>
        <name>spermidine</name>
        <dbReference type="ChEBI" id="CHEBI:57834"/>
    </ligand>
</feature>
<feature type="binding site" evidence="1">
    <location>
        <position position="165"/>
    </location>
    <ligand>
        <name>S-methyl-5'-thioadenosine</name>
        <dbReference type="ChEBI" id="CHEBI:17509"/>
    </ligand>
</feature>
<keyword id="KW-0963">Cytoplasm</keyword>
<keyword id="KW-0620">Polyamine biosynthesis</keyword>
<keyword id="KW-1185">Reference proteome</keyword>
<keyword id="KW-0745">Spermidine biosynthesis</keyword>
<keyword id="KW-0808">Transferase</keyword>
<comment type="function">
    <text evidence="1">Catalyzes the irreversible transfer of a propylamine group from the amino donor S-adenosylmethioninamine (decarboxy-AdoMet) to putrescine (1,4-diaminobutane) to yield spermidine.</text>
</comment>
<comment type="catalytic activity">
    <reaction evidence="1">
        <text>S-adenosyl 3-(methylsulfanyl)propylamine + putrescine = S-methyl-5'-thioadenosine + spermidine + H(+)</text>
        <dbReference type="Rhea" id="RHEA:12721"/>
        <dbReference type="ChEBI" id="CHEBI:15378"/>
        <dbReference type="ChEBI" id="CHEBI:17509"/>
        <dbReference type="ChEBI" id="CHEBI:57443"/>
        <dbReference type="ChEBI" id="CHEBI:57834"/>
        <dbReference type="ChEBI" id="CHEBI:326268"/>
        <dbReference type="EC" id="2.5.1.16"/>
    </reaction>
</comment>
<comment type="pathway">
    <text evidence="1">Amine and polyamine biosynthesis; spermidine biosynthesis; spermidine from putrescine: step 1/1.</text>
</comment>
<comment type="subunit">
    <text evidence="1">Homodimer or homotetramer.</text>
</comment>
<comment type="subcellular location">
    <subcellularLocation>
        <location evidence="1">Cytoplasm</location>
    </subcellularLocation>
</comment>
<comment type="similarity">
    <text evidence="1">Belongs to the spermidine/spermine synthase family.</text>
</comment>
<protein>
    <recommendedName>
        <fullName evidence="1">Polyamine aminopropyltransferase</fullName>
    </recommendedName>
    <alternativeName>
        <fullName evidence="1">Putrescine aminopropyltransferase</fullName>
        <shortName evidence="1">PAPT</shortName>
    </alternativeName>
    <alternativeName>
        <fullName evidence="1">Spermidine synthase</fullName>
        <shortName evidence="1">SPDS</shortName>
        <shortName evidence="1">SPDSY</shortName>
        <ecNumber evidence="1">2.5.1.16</ecNumber>
    </alternativeName>
</protein>
<accession>B8GQ45</accession>
<name>SPEE_THISH</name>
<sequence>MSLDNTWFTEIHQDTAFSLRMKEKLHEEQTPFQKIEIYETEGFGTLMVIDGCVMLTDRDNFIYHEMMSHPVLYSHSDPKNVLIIGGGDCGTLREVLKHPEVKSATQVDIDERVTRLAEKYFPELCDSNDDPRAKLLFDDGIKYVQDAAPGSLDVIIIDSTDPVGPAEGLFSTAFYRDCIKALGPGGLLVQQSESPLLHTDSIIKPMHDSLRAAGFLDTLALHFPQCSYPSGWWTATMACKDMPVTFLREAQAEDKPFETHYYNAAIQRAAIACPEFFRKKLYG</sequence>
<dbReference type="EC" id="2.5.1.16" evidence="1"/>
<dbReference type="EMBL" id="CP001339">
    <property type="protein sequence ID" value="ACL74192.1"/>
    <property type="molecule type" value="Genomic_DNA"/>
</dbReference>
<dbReference type="RefSeq" id="WP_012639654.1">
    <property type="nucleotide sequence ID" value="NC_011901.1"/>
</dbReference>
<dbReference type="SMR" id="B8GQ45"/>
<dbReference type="STRING" id="396588.Tgr7_3123"/>
<dbReference type="KEGG" id="tgr:Tgr7_3123"/>
<dbReference type="eggNOG" id="COG0421">
    <property type="taxonomic scope" value="Bacteria"/>
</dbReference>
<dbReference type="HOGENOM" id="CLU_048199_0_0_6"/>
<dbReference type="OrthoDB" id="9793120at2"/>
<dbReference type="UniPathway" id="UPA00248">
    <property type="reaction ID" value="UER00314"/>
</dbReference>
<dbReference type="Proteomes" id="UP000002383">
    <property type="component" value="Chromosome"/>
</dbReference>
<dbReference type="GO" id="GO:0005829">
    <property type="term" value="C:cytosol"/>
    <property type="evidence" value="ECO:0007669"/>
    <property type="project" value="TreeGrafter"/>
</dbReference>
<dbReference type="GO" id="GO:0004766">
    <property type="term" value="F:spermidine synthase activity"/>
    <property type="evidence" value="ECO:0007669"/>
    <property type="project" value="UniProtKB-UniRule"/>
</dbReference>
<dbReference type="GO" id="GO:0008295">
    <property type="term" value="P:spermidine biosynthetic process"/>
    <property type="evidence" value="ECO:0007669"/>
    <property type="project" value="UniProtKB-UniRule"/>
</dbReference>
<dbReference type="CDD" id="cd02440">
    <property type="entry name" value="AdoMet_MTases"/>
    <property type="match status" value="1"/>
</dbReference>
<dbReference type="Gene3D" id="2.30.140.10">
    <property type="entry name" value="Spermidine synthase, tetramerisation domain"/>
    <property type="match status" value="1"/>
</dbReference>
<dbReference type="Gene3D" id="3.40.50.150">
    <property type="entry name" value="Vaccinia Virus protein VP39"/>
    <property type="match status" value="1"/>
</dbReference>
<dbReference type="HAMAP" id="MF_00198">
    <property type="entry name" value="Spermidine_synth"/>
    <property type="match status" value="1"/>
</dbReference>
<dbReference type="InterPro" id="IPR030374">
    <property type="entry name" value="PABS"/>
</dbReference>
<dbReference type="InterPro" id="IPR030373">
    <property type="entry name" value="PABS_CS"/>
</dbReference>
<dbReference type="InterPro" id="IPR029063">
    <property type="entry name" value="SAM-dependent_MTases_sf"/>
</dbReference>
<dbReference type="InterPro" id="IPR001045">
    <property type="entry name" value="Spermi_synthase"/>
</dbReference>
<dbReference type="InterPro" id="IPR035246">
    <property type="entry name" value="Spermidine_synt_N"/>
</dbReference>
<dbReference type="InterPro" id="IPR037163">
    <property type="entry name" value="Spermidine_synt_N_sf"/>
</dbReference>
<dbReference type="NCBIfam" id="NF002010">
    <property type="entry name" value="PRK00811.1"/>
    <property type="match status" value="1"/>
</dbReference>
<dbReference type="NCBIfam" id="TIGR00417">
    <property type="entry name" value="speE"/>
    <property type="match status" value="1"/>
</dbReference>
<dbReference type="PANTHER" id="PTHR11558:SF11">
    <property type="entry name" value="SPERMIDINE SYNTHASE"/>
    <property type="match status" value="1"/>
</dbReference>
<dbReference type="PANTHER" id="PTHR11558">
    <property type="entry name" value="SPERMIDINE/SPERMINE SYNTHASE"/>
    <property type="match status" value="1"/>
</dbReference>
<dbReference type="Pfam" id="PF17284">
    <property type="entry name" value="Spermine_synt_N"/>
    <property type="match status" value="1"/>
</dbReference>
<dbReference type="Pfam" id="PF01564">
    <property type="entry name" value="Spermine_synth"/>
    <property type="match status" value="1"/>
</dbReference>
<dbReference type="SUPFAM" id="SSF53335">
    <property type="entry name" value="S-adenosyl-L-methionine-dependent methyltransferases"/>
    <property type="match status" value="1"/>
</dbReference>
<dbReference type="PROSITE" id="PS01330">
    <property type="entry name" value="PABS_1"/>
    <property type="match status" value="1"/>
</dbReference>
<dbReference type="PROSITE" id="PS51006">
    <property type="entry name" value="PABS_2"/>
    <property type="match status" value="1"/>
</dbReference>
<organism>
    <name type="scientific">Thioalkalivibrio sulfidiphilus (strain HL-EbGR7)</name>
    <dbReference type="NCBI Taxonomy" id="396588"/>
    <lineage>
        <taxon>Bacteria</taxon>
        <taxon>Pseudomonadati</taxon>
        <taxon>Pseudomonadota</taxon>
        <taxon>Gammaproteobacteria</taxon>
        <taxon>Chromatiales</taxon>
        <taxon>Ectothiorhodospiraceae</taxon>
        <taxon>Thioalkalivibrio</taxon>
    </lineage>
</organism>
<proteinExistence type="inferred from homology"/>
<gene>
    <name evidence="1" type="primary">speE</name>
    <name type="ordered locus">Tgr7_3123</name>
</gene>
<evidence type="ECO:0000255" key="1">
    <source>
        <dbReference type="HAMAP-Rule" id="MF_00198"/>
    </source>
</evidence>